<organism>
    <name type="scientific">Edwardsiella ictaluri (strain 93-146)</name>
    <dbReference type="NCBI Taxonomy" id="634503"/>
    <lineage>
        <taxon>Bacteria</taxon>
        <taxon>Pseudomonadati</taxon>
        <taxon>Pseudomonadota</taxon>
        <taxon>Gammaproteobacteria</taxon>
        <taxon>Enterobacterales</taxon>
        <taxon>Hafniaceae</taxon>
        <taxon>Edwardsiella</taxon>
    </lineage>
</organism>
<name>ZAPC_EDWI9</name>
<feature type="chain" id="PRO_0000413777" description="Cell division protein ZapC">
    <location>
        <begin position="1"/>
        <end position="185"/>
    </location>
</feature>
<proteinExistence type="inferred from homology"/>
<reference key="1">
    <citation type="submission" date="2009-03" db="EMBL/GenBank/DDBJ databases">
        <title>Complete genome sequence of Edwardsiella ictaluri 93-146.</title>
        <authorList>
            <person name="Williams M.L."/>
            <person name="Gillaspy A.F."/>
            <person name="Dyer D.W."/>
            <person name="Thune R.L."/>
            <person name="Waldbieser G.C."/>
            <person name="Schuster S.C."/>
            <person name="Gipson J."/>
            <person name="Zaitshik J."/>
            <person name="Landry C."/>
            <person name="Lawrence M.L."/>
        </authorList>
    </citation>
    <scope>NUCLEOTIDE SEQUENCE [LARGE SCALE GENOMIC DNA]</scope>
    <source>
        <strain>93-146</strain>
    </source>
</reference>
<accession>C5BD72</accession>
<dbReference type="EMBL" id="CP001600">
    <property type="protein sequence ID" value="ACR68567.1"/>
    <property type="molecule type" value="Genomic_DNA"/>
</dbReference>
<dbReference type="RefSeq" id="WP_015870732.1">
    <property type="nucleotide sequence ID" value="NZ_CP169062.1"/>
</dbReference>
<dbReference type="SMR" id="C5BD72"/>
<dbReference type="STRING" id="67780.B6E78_00235"/>
<dbReference type="KEGG" id="eic:NT01EI_1377"/>
<dbReference type="PATRIC" id="fig|634503.3.peg.1238"/>
<dbReference type="HOGENOM" id="CLU_128248_0_0_6"/>
<dbReference type="OrthoDB" id="5765005at2"/>
<dbReference type="Proteomes" id="UP000001485">
    <property type="component" value="Chromosome"/>
</dbReference>
<dbReference type="GO" id="GO:0005737">
    <property type="term" value="C:cytoplasm"/>
    <property type="evidence" value="ECO:0007669"/>
    <property type="project" value="UniProtKB-SubCell"/>
</dbReference>
<dbReference type="GO" id="GO:0000917">
    <property type="term" value="P:division septum assembly"/>
    <property type="evidence" value="ECO:0007669"/>
    <property type="project" value="UniProtKB-KW"/>
</dbReference>
<dbReference type="GO" id="GO:0043093">
    <property type="term" value="P:FtsZ-dependent cytokinesis"/>
    <property type="evidence" value="ECO:0007669"/>
    <property type="project" value="UniProtKB-UniRule"/>
</dbReference>
<dbReference type="HAMAP" id="MF_00906">
    <property type="entry name" value="ZapC"/>
    <property type="match status" value="1"/>
</dbReference>
<dbReference type="InterPro" id="IPR009809">
    <property type="entry name" value="ZapC"/>
</dbReference>
<dbReference type="InterPro" id="IPR048372">
    <property type="entry name" value="ZapC_C"/>
</dbReference>
<dbReference type="InterPro" id="IPR048373">
    <property type="entry name" value="ZapC_N"/>
</dbReference>
<dbReference type="Pfam" id="PF07126">
    <property type="entry name" value="ZapC_C"/>
    <property type="match status" value="1"/>
</dbReference>
<dbReference type="Pfam" id="PF21083">
    <property type="entry name" value="ZapC_N"/>
    <property type="match status" value="1"/>
</dbReference>
<dbReference type="PIRSF" id="PIRSF010252">
    <property type="entry name" value="ZapC"/>
    <property type="match status" value="1"/>
</dbReference>
<gene>
    <name evidence="1" type="primary">zapC</name>
    <name type="ordered locus">NT01EI_1377</name>
</gene>
<comment type="function">
    <text evidence="1">Contributes to the efficiency of the cell division process by stabilizing the polymeric form of the cell division protein FtsZ. Acts by promoting interactions between FtsZ protofilaments and suppressing the GTPase activity of FtsZ.</text>
</comment>
<comment type="subunit">
    <text evidence="1">Interacts directly with FtsZ.</text>
</comment>
<comment type="subcellular location">
    <subcellularLocation>
        <location evidence="1">Cytoplasm</location>
    </subcellularLocation>
</comment>
<comment type="similarity">
    <text evidence="1">Belongs to the ZapC family.</text>
</comment>
<keyword id="KW-0131">Cell cycle</keyword>
<keyword id="KW-0132">Cell division</keyword>
<keyword id="KW-0963">Cytoplasm</keyword>
<keyword id="KW-0717">Septation</keyword>
<sequence>MNIKPGDRWCWFFDRQHDRLMLDLANGMVFRSRFPSKMLTPDAFDASSFCVDDAASYYHFAERCQASGLDTAQCAELVLNALVAQRFLKPIMPKSWYFTPQPGRYVPEMGELVGVQLLDTPDWGRLLVIAPGASASLCLLAQPSLALAGKRLMLGEAIKVMHDRLLPLSTHPETLSDDTTLACAG</sequence>
<evidence type="ECO:0000255" key="1">
    <source>
        <dbReference type="HAMAP-Rule" id="MF_00906"/>
    </source>
</evidence>
<protein>
    <recommendedName>
        <fullName evidence="1">Cell division protein ZapC</fullName>
    </recommendedName>
</protein>